<sequence>MKDTVSQPAGGRGATAPRPADAASPSCGSSPSADSVSVVLAGGGTAGHVEPAMAVADALVALDPRVRITALGTLRGLETRLVPQRGYHLELITAVPMPRKPGGDLARLPSRVWRAVREARDVLDDVDADVVVGFGGYVALPAYLAARGLPLPPRRRRRIPVVIHEANARAGLANRVGAHTADRVLSAVPDSGLRRAEVVGVPVRASIAALDRAVLRAEARAHFGFPDDARVLLVFGGSQGAVSLNRAVSGAAADLAAAGVCVLHAHGPQNVLELRRRAQGDPPYVAVPYLDRMELAYAAADLVICRAGAMTVAEVSAVGLPAIYVPLPIGNGEQRLNALPVVNAGGGMVVADAALTPELVARQVAGLLTDPARLAAMTAAAARVGHRDAAGQVARAALAVATGAGARTTT</sequence>
<name>MURG_MYCTO</name>
<dbReference type="EC" id="2.4.1.227" evidence="1"/>
<dbReference type="EMBL" id="AE000516">
    <property type="protein sequence ID" value="AAK46496.1"/>
    <property type="molecule type" value="Genomic_DNA"/>
</dbReference>
<dbReference type="PIR" id="E70579">
    <property type="entry name" value="E70579"/>
</dbReference>
<dbReference type="RefSeq" id="WP_003899190.1">
    <property type="nucleotide sequence ID" value="NZ_KK341227.1"/>
</dbReference>
<dbReference type="SMR" id="P9WJK8"/>
<dbReference type="CAZy" id="GT28">
    <property type="family name" value="Glycosyltransferase Family 28"/>
</dbReference>
<dbReference type="KEGG" id="mtc:MT2212"/>
<dbReference type="PATRIC" id="fig|83331.31.peg.2385"/>
<dbReference type="HOGENOM" id="CLU_037404_1_0_11"/>
<dbReference type="UniPathway" id="UPA00219"/>
<dbReference type="Proteomes" id="UP000001020">
    <property type="component" value="Chromosome"/>
</dbReference>
<dbReference type="GO" id="GO:0005886">
    <property type="term" value="C:plasma membrane"/>
    <property type="evidence" value="ECO:0007669"/>
    <property type="project" value="UniProtKB-SubCell"/>
</dbReference>
<dbReference type="GO" id="GO:0051991">
    <property type="term" value="F:UDP-N-acetyl-D-glucosamine:N-acetylmuramoyl-L-alanyl-D-glutamyl-meso-2,6-diaminopimelyl-D-alanyl-D-alanine-diphosphoundecaprenol 4-beta-N-acetylglucosaminlytransferase activity"/>
    <property type="evidence" value="ECO:0007669"/>
    <property type="project" value="RHEA"/>
</dbReference>
<dbReference type="GO" id="GO:0050511">
    <property type="term" value="F:undecaprenyldiphospho-muramoylpentapeptide beta-N-acetylglucosaminyltransferase activity"/>
    <property type="evidence" value="ECO:0007669"/>
    <property type="project" value="UniProtKB-UniRule"/>
</dbReference>
<dbReference type="GO" id="GO:0005975">
    <property type="term" value="P:carbohydrate metabolic process"/>
    <property type="evidence" value="ECO:0007669"/>
    <property type="project" value="InterPro"/>
</dbReference>
<dbReference type="GO" id="GO:0051301">
    <property type="term" value="P:cell division"/>
    <property type="evidence" value="ECO:0007669"/>
    <property type="project" value="UniProtKB-KW"/>
</dbReference>
<dbReference type="GO" id="GO:0071555">
    <property type="term" value="P:cell wall organization"/>
    <property type="evidence" value="ECO:0007669"/>
    <property type="project" value="UniProtKB-KW"/>
</dbReference>
<dbReference type="GO" id="GO:0030259">
    <property type="term" value="P:lipid glycosylation"/>
    <property type="evidence" value="ECO:0007669"/>
    <property type="project" value="UniProtKB-UniRule"/>
</dbReference>
<dbReference type="GO" id="GO:0009252">
    <property type="term" value="P:peptidoglycan biosynthetic process"/>
    <property type="evidence" value="ECO:0007669"/>
    <property type="project" value="UniProtKB-UniRule"/>
</dbReference>
<dbReference type="GO" id="GO:0008360">
    <property type="term" value="P:regulation of cell shape"/>
    <property type="evidence" value="ECO:0007669"/>
    <property type="project" value="UniProtKB-KW"/>
</dbReference>
<dbReference type="CDD" id="cd03785">
    <property type="entry name" value="GT28_MurG"/>
    <property type="match status" value="1"/>
</dbReference>
<dbReference type="Gene3D" id="3.40.50.2000">
    <property type="entry name" value="Glycogen Phosphorylase B"/>
    <property type="match status" value="2"/>
</dbReference>
<dbReference type="HAMAP" id="MF_00033">
    <property type="entry name" value="MurG"/>
    <property type="match status" value="1"/>
</dbReference>
<dbReference type="InterPro" id="IPR006009">
    <property type="entry name" value="GlcNAc_MurG"/>
</dbReference>
<dbReference type="InterPro" id="IPR007235">
    <property type="entry name" value="Glyco_trans_28_C"/>
</dbReference>
<dbReference type="InterPro" id="IPR004276">
    <property type="entry name" value="GlycoTrans_28_N"/>
</dbReference>
<dbReference type="NCBIfam" id="TIGR01133">
    <property type="entry name" value="murG"/>
    <property type="match status" value="1"/>
</dbReference>
<dbReference type="PANTHER" id="PTHR21015:SF22">
    <property type="entry name" value="GLYCOSYLTRANSFERASE"/>
    <property type="match status" value="1"/>
</dbReference>
<dbReference type="PANTHER" id="PTHR21015">
    <property type="entry name" value="UDP-N-ACETYLGLUCOSAMINE--N-ACETYLMURAMYL-(PENTAPEPTIDE) PYROPHOSPHORYL-UNDECAPRENOL N-ACETYLGLUCOSAMINE TRANSFERASE 1"/>
    <property type="match status" value="1"/>
</dbReference>
<dbReference type="Pfam" id="PF04101">
    <property type="entry name" value="Glyco_tran_28_C"/>
    <property type="match status" value="1"/>
</dbReference>
<dbReference type="Pfam" id="PF03033">
    <property type="entry name" value="Glyco_transf_28"/>
    <property type="match status" value="1"/>
</dbReference>
<dbReference type="SUPFAM" id="SSF53756">
    <property type="entry name" value="UDP-Glycosyltransferase/glycogen phosphorylase"/>
    <property type="match status" value="1"/>
</dbReference>
<evidence type="ECO:0000255" key="1">
    <source>
        <dbReference type="HAMAP-Rule" id="MF_00033"/>
    </source>
</evidence>
<evidence type="ECO:0000256" key="2">
    <source>
        <dbReference type="SAM" id="MobiDB-lite"/>
    </source>
</evidence>
<feature type="chain" id="PRO_0000427812" description="UDP-N-acetylglucosamine--N-acetylmuramyl-(pentapeptide) pyrophosphoryl-undecaprenol N-acetylglucosamine transferase">
    <location>
        <begin position="1"/>
        <end position="410"/>
    </location>
</feature>
<feature type="region of interest" description="Disordered" evidence="2">
    <location>
        <begin position="1"/>
        <end position="35"/>
    </location>
</feature>
<feature type="compositionally biased region" description="Low complexity" evidence="2">
    <location>
        <begin position="14"/>
        <end position="35"/>
    </location>
</feature>
<feature type="binding site" evidence="1">
    <location>
        <begin position="45"/>
        <end position="47"/>
    </location>
    <ligand>
        <name>UDP-N-acetyl-alpha-D-glucosamine</name>
        <dbReference type="ChEBI" id="CHEBI:57705"/>
    </ligand>
</feature>
<feature type="binding site" evidence="1">
    <location>
        <position position="167"/>
    </location>
    <ligand>
        <name>UDP-N-acetyl-alpha-D-glucosamine</name>
        <dbReference type="ChEBI" id="CHEBI:57705"/>
    </ligand>
</feature>
<feature type="binding site" evidence="1">
    <location>
        <position position="204"/>
    </location>
    <ligand>
        <name>UDP-N-acetyl-alpha-D-glucosamine</name>
        <dbReference type="ChEBI" id="CHEBI:57705"/>
    </ligand>
</feature>
<feature type="binding site" evidence="1">
    <location>
        <position position="238"/>
    </location>
    <ligand>
        <name>UDP-N-acetyl-alpha-D-glucosamine</name>
        <dbReference type="ChEBI" id="CHEBI:57705"/>
    </ligand>
</feature>
<feature type="binding site" evidence="1">
    <location>
        <position position="334"/>
    </location>
    <ligand>
        <name>UDP-N-acetyl-alpha-D-glucosamine</name>
        <dbReference type="ChEBI" id="CHEBI:57705"/>
    </ligand>
</feature>
<proteinExistence type="inferred from homology"/>
<accession>P9WJK8</accession>
<accession>L0T8S3</accession>
<accession>O06224</accession>
<reference key="1">
    <citation type="journal article" date="2002" name="J. Bacteriol.">
        <title>Whole-genome comparison of Mycobacterium tuberculosis clinical and laboratory strains.</title>
        <authorList>
            <person name="Fleischmann R.D."/>
            <person name="Alland D."/>
            <person name="Eisen J.A."/>
            <person name="Carpenter L."/>
            <person name="White O."/>
            <person name="Peterson J.D."/>
            <person name="DeBoy R.T."/>
            <person name="Dodson R.J."/>
            <person name="Gwinn M.L."/>
            <person name="Haft D.H."/>
            <person name="Hickey E.K."/>
            <person name="Kolonay J.F."/>
            <person name="Nelson W.C."/>
            <person name="Umayam L.A."/>
            <person name="Ermolaeva M.D."/>
            <person name="Salzberg S.L."/>
            <person name="Delcher A."/>
            <person name="Utterback T.R."/>
            <person name="Weidman J.F."/>
            <person name="Khouri H.M."/>
            <person name="Gill J."/>
            <person name="Mikula A."/>
            <person name="Bishai W."/>
            <person name="Jacobs W.R. Jr."/>
            <person name="Venter J.C."/>
            <person name="Fraser C.M."/>
        </authorList>
    </citation>
    <scope>NUCLEOTIDE SEQUENCE [LARGE SCALE GENOMIC DNA]</scope>
    <source>
        <strain>CDC 1551 / Oshkosh</strain>
    </source>
</reference>
<gene>
    <name evidence="1" type="primary">murG</name>
    <name type="ordered locus">MT2212</name>
</gene>
<protein>
    <recommendedName>
        <fullName evidence="1">UDP-N-acetylglucosamine--N-acetylmuramyl-(pentapeptide) pyrophosphoryl-undecaprenol N-acetylglucosamine transferase</fullName>
        <ecNumber evidence="1">2.4.1.227</ecNumber>
    </recommendedName>
    <alternativeName>
        <fullName evidence="1">Undecaprenyl-PP-MurNAc-pentapeptide-UDPGlcNAc GlcNAc transferase</fullName>
    </alternativeName>
</protein>
<keyword id="KW-0131">Cell cycle</keyword>
<keyword id="KW-0132">Cell division</keyword>
<keyword id="KW-1003">Cell membrane</keyword>
<keyword id="KW-0133">Cell shape</keyword>
<keyword id="KW-0961">Cell wall biogenesis/degradation</keyword>
<keyword id="KW-0328">Glycosyltransferase</keyword>
<keyword id="KW-0472">Membrane</keyword>
<keyword id="KW-0573">Peptidoglycan synthesis</keyword>
<keyword id="KW-1185">Reference proteome</keyword>
<keyword id="KW-0808">Transferase</keyword>
<organism>
    <name type="scientific">Mycobacterium tuberculosis (strain CDC 1551 / Oshkosh)</name>
    <dbReference type="NCBI Taxonomy" id="83331"/>
    <lineage>
        <taxon>Bacteria</taxon>
        <taxon>Bacillati</taxon>
        <taxon>Actinomycetota</taxon>
        <taxon>Actinomycetes</taxon>
        <taxon>Mycobacteriales</taxon>
        <taxon>Mycobacteriaceae</taxon>
        <taxon>Mycobacterium</taxon>
        <taxon>Mycobacterium tuberculosis complex</taxon>
    </lineage>
</organism>
<comment type="function">
    <text evidence="1">Cell wall formation. Catalyzes the transfer of a GlcNAc subunit on undecaprenyl-pyrophosphoryl-MurNAc-pentapeptide (lipid intermediate I) to form undecaprenyl-pyrophosphoryl-MurNAc-(pentapeptide)GlcNAc (lipid intermediate II).</text>
</comment>
<comment type="catalytic activity">
    <reaction evidence="1">
        <text>di-trans,octa-cis-undecaprenyl diphospho-N-acetyl-alpha-D-muramoyl-L-alanyl-D-glutamyl-meso-2,6-diaminopimeloyl-D-alanyl-D-alanine + UDP-N-acetyl-alpha-D-glucosamine = di-trans,octa-cis-undecaprenyl diphospho-[N-acetyl-alpha-D-glucosaminyl-(1-&gt;4)]-N-acetyl-alpha-D-muramoyl-L-alanyl-D-glutamyl-meso-2,6-diaminopimeloyl-D-alanyl-D-alanine + UDP + H(+)</text>
        <dbReference type="Rhea" id="RHEA:31227"/>
        <dbReference type="ChEBI" id="CHEBI:15378"/>
        <dbReference type="ChEBI" id="CHEBI:57705"/>
        <dbReference type="ChEBI" id="CHEBI:58223"/>
        <dbReference type="ChEBI" id="CHEBI:61387"/>
        <dbReference type="ChEBI" id="CHEBI:61388"/>
        <dbReference type="EC" id="2.4.1.227"/>
    </reaction>
</comment>
<comment type="pathway">
    <text evidence="1">Cell wall biogenesis; peptidoglycan biosynthesis.</text>
</comment>
<comment type="subcellular location">
    <subcellularLocation>
        <location evidence="1">Cell membrane</location>
        <topology evidence="1">Peripheral membrane protein</topology>
        <orientation evidence="1">Cytoplasmic side</orientation>
    </subcellularLocation>
</comment>
<comment type="similarity">
    <text evidence="1">Belongs to the glycosyltransferase 28 family. MurG subfamily.</text>
</comment>